<sequence length="150" mass="17680">MLWSFNNHFVIDNSFKQEYDKPNITAFFNRSLQFFQENSLVLKPELFSLQKYTKDVYGLNVINQLNLNKHPMLIPLTWDKKQKFISFIESCVQKYSQVKKDNQVFSLTVGKRVFFLLLINKQFKQIKLETALKYLGFKTSLGAMDSTTES</sequence>
<dbReference type="EMBL" id="L43967">
    <property type="protein sequence ID" value="AAC71480.2"/>
    <property type="molecule type" value="Genomic_DNA"/>
</dbReference>
<dbReference type="STRING" id="243273.MG_494"/>
<dbReference type="KEGG" id="mge:MG_494"/>
<dbReference type="HOGENOM" id="CLU_1738481_0_0_14"/>
<dbReference type="InParanoid" id="Q9ZB77"/>
<dbReference type="Proteomes" id="UP000000807">
    <property type="component" value="Chromosome"/>
</dbReference>
<reference key="1">
    <citation type="journal article" date="1995" name="Science">
        <title>The minimal gene complement of Mycoplasma genitalium.</title>
        <authorList>
            <person name="Fraser C.M."/>
            <person name="Gocayne J.D."/>
            <person name="White O."/>
            <person name="Adams M.D."/>
            <person name="Clayton R.A."/>
            <person name="Fleischmann R.D."/>
            <person name="Bult C.J."/>
            <person name="Kerlavage A.R."/>
            <person name="Sutton G.G."/>
            <person name="Kelley J.M."/>
            <person name="Fritchman J.L."/>
            <person name="Weidman J.F."/>
            <person name="Small K.V."/>
            <person name="Sandusky M."/>
            <person name="Fuhrmann J.L."/>
            <person name="Nguyen D.T."/>
            <person name="Utterback T.R."/>
            <person name="Saudek D.M."/>
            <person name="Phillips C.A."/>
            <person name="Merrick J.M."/>
            <person name="Tomb J.-F."/>
            <person name="Dougherty B.A."/>
            <person name="Bott K.F."/>
            <person name="Hu P.-C."/>
            <person name="Lucier T.S."/>
            <person name="Peterson S.N."/>
            <person name="Smith H.O."/>
            <person name="Hutchison C.A. III"/>
            <person name="Venter J.C."/>
        </authorList>
    </citation>
    <scope>NUCLEOTIDE SEQUENCE [LARGE SCALE GENOMIC DNA]</scope>
    <source>
        <strain>ATCC 33530 / DSM 19775 / NCTC 10195 / G37</strain>
    </source>
</reference>
<reference key="2">
    <citation type="submission" date="1998-10" db="EMBL/GenBank/DDBJ databases">
        <authorList>
            <person name="Fraser C.M."/>
            <person name="Gocayne J.D."/>
            <person name="White O."/>
            <person name="Adams M.D."/>
            <person name="Clayton R.A."/>
            <person name="Fleischmann R.D."/>
            <person name="Bult C.J."/>
            <person name="Kerlavage A.R."/>
            <person name="Sutton G.G."/>
            <person name="Kelley J.M."/>
            <person name="Fritchman J.L."/>
            <person name="Weidman J.F."/>
            <person name="Small K.V."/>
            <person name="Sandusky M."/>
            <person name="Fuhrmann J.L."/>
            <person name="Nguyen D.T."/>
            <person name="Utterback T.R."/>
            <person name="Saudek D.M."/>
            <person name="Phillips C.A."/>
            <person name="Merrick J.M."/>
            <person name="Tomb J.-F."/>
            <person name="Dougherty B.A."/>
            <person name="Bott K.F."/>
            <person name="Hu P.-C."/>
            <person name="Lucier T.S."/>
            <person name="Peterson S.N."/>
            <person name="Smith H.O."/>
            <person name="Hutchison C.A. III"/>
            <person name="Venter J.C."/>
        </authorList>
    </citation>
    <scope>IDENTIFICATION</scope>
</reference>
<reference key="3">
    <citation type="journal article" date="2006" name="Proc. Natl. Acad. Sci. U.S.A.">
        <title>Essential genes of a minimal bacterium.</title>
        <authorList>
            <person name="Glass J.I."/>
            <person name="Assad-Garcia N."/>
            <person name="Alperovich N."/>
            <person name="Yooseph S."/>
            <person name="Lewis M.R."/>
            <person name="Maruf M."/>
            <person name="Hutchison C.A. III"/>
            <person name="Smith H.O."/>
            <person name="Venter J.C."/>
        </authorList>
    </citation>
    <scope>SEQUENCE REVISION</scope>
    <scope>DISRUPTION PHENOTYPE</scope>
    <source>
        <strain>ATCC 33530 / DSM 19775 / NCTC 10195 / G37</strain>
    </source>
</reference>
<keyword id="KW-1185">Reference proteome</keyword>
<proteinExistence type="predicted"/>
<comment type="disruption phenotype">
    <text evidence="1">Not essential, it can be deleted.</text>
</comment>
<gene>
    <name evidence="2" type="ordered locus">MG_494</name>
    <name evidence="2" type="ORF">MG255.1</name>
</gene>
<evidence type="ECO:0000269" key="1">
    <source>
    </source>
</evidence>
<evidence type="ECO:0000312" key="2">
    <source>
        <dbReference type="EMBL" id="AAC71480.2"/>
    </source>
</evidence>
<accession>Q9ZB77</accession>
<organism>
    <name type="scientific">Mycoplasma genitalium (strain ATCC 33530 / DSM 19775 / NCTC 10195 / G37)</name>
    <name type="common">Mycoplasmoides genitalium</name>
    <dbReference type="NCBI Taxonomy" id="243273"/>
    <lineage>
        <taxon>Bacteria</taxon>
        <taxon>Bacillati</taxon>
        <taxon>Mycoplasmatota</taxon>
        <taxon>Mycoplasmoidales</taxon>
        <taxon>Mycoplasmoidaceae</taxon>
        <taxon>Mycoplasmoides</taxon>
    </lineage>
</organism>
<name>Y255A_MYCGE</name>
<feature type="chain" id="PRO_0000210490" description="Uncharacterized protein MG255.1">
    <location>
        <begin position="1"/>
        <end position="150"/>
    </location>
</feature>
<protein>
    <recommendedName>
        <fullName>Uncharacterized protein MG255.1</fullName>
    </recommendedName>
</protein>